<protein>
    <recommendedName>
        <fullName evidence="8">Glycerophosphocholine cholinephosphodiesterase ENPP6</fullName>
        <shortName>GPC-Cpde</shortName>
        <ecNumber evidence="3">3.1.4.-</ecNumber>
        <ecNumber evidence="6">3.1.4.38</ecNumber>
    </recommendedName>
    <alternativeName>
        <fullName evidence="7">Choline-specific glycerophosphodiester phosphodiesterase</fullName>
    </alternativeName>
    <alternativeName>
        <fullName>Ectonucleotide pyrophosphatase/phosphodiesterase family member 6</fullName>
        <shortName>E-NPP 6</shortName>
        <shortName>NPP-6</shortName>
    </alternativeName>
</protein>
<organism>
    <name type="scientific">Homo sapiens</name>
    <name type="common">Human</name>
    <dbReference type="NCBI Taxonomy" id="9606"/>
    <lineage>
        <taxon>Eukaryota</taxon>
        <taxon>Metazoa</taxon>
        <taxon>Chordata</taxon>
        <taxon>Craniata</taxon>
        <taxon>Vertebrata</taxon>
        <taxon>Euteleostomi</taxon>
        <taxon>Mammalia</taxon>
        <taxon>Eutheria</taxon>
        <taxon>Euarchontoglires</taxon>
        <taxon>Primates</taxon>
        <taxon>Haplorrhini</taxon>
        <taxon>Catarrhini</taxon>
        <taxon>Hominidae</taxon>
        <taxon>Homo</taxon>
    </lineage>
</organism>
<accession>Q6UWR7</accession>
<accession>Q4W5Q1</accession>
<accession>Q96M57</accession>
<gene>
    <name evidence="9" type="primary">ENPP6</name>
    <name type="ORF">UNQ1889/PRO4334</name>
</gene>
<dbReference type="EC" id="3.1.4.-" evidence="3"/>
<dbReference type="EC" id="3.1.4.38" evidence="6"/>
<dbReference type="EMBL" id="AY358676">
    <property type="protein sequence ID" value="AAQ89039.1"/>
    <property type="molecule type" value="mRNA"/>
</dbReference>
<dbReference type="EMBL" id="AK057370">
    <property type="protein sequence ID" value="BAB71455.1"/>
    <property type="molecule type" value="mRNA"/>
</dbReference>
<dbReference type="EMBL" id="AC079080">
    <property type="protein sequence ID" value="AAY40908.1"/>
    <property type="molecule type" value="Genomic_DNA"/>
</dbReference>
<dbReference type="EMBL" id="AC107222">
    <property type="status" value="NOT_ANNOTATED_CDS"/>
    <property type="molecule type" value="Genomic_DNA"/>
</dbReference>
<dbReference type="EMBL" id="BC035035">
    <property type="protein sequence ID" value="AAH35035.1"/>
    <property type="molecule type" value="mRNA"/>
</dbReference>
<dbReference type="CCDS" id="CCDS3834.1"/>
<dbReference type="RefSeq" id="NP_699174.1">
    <property type="nucleotide sequence ID" value="NM_153343.4"/>
</dbReference>
<dbReference type="SMR" id="Q6UWR7"/>
<dbReference type="BioGRID" id="126350">
    <property type="interactions" value="46"/>
</dbReference>
<dbReference type="FunCoup" id="Q6UWR7">
    <property type="interactions" value="83"/>
</dbReference>
<dbReference type="IntAct" id="Q6UWR7">
    <property type="interactions" value="35"/>
</dbReference>
<dbReference type="STRING" id="9606.ENSP00000296741"/>
<dbReference type="ChEMBL" id="CHEMBL6033"/>
<dbReference type="GlyCosmos" id="Q6UWR7">
    <property type="glycosylation" value="4 sites, No reported glycans"/>
</dbReference>
<dbReference type="GlyGen" id="Q6UWR7">
    <property type="glycosylation" value="4 sites"/>
</dbReference>
<dbReference type="iPTMnet" id="Q6UWR7"/>
<dbReference type="PhosphoSitePlus" id="Q6UWR7"/>
<dbReference type="SwissPalm" id="Q6UWR7"/>
<dbReference type="BioMuta" id="ENPP6"/>
<dbReference type="DMDM" id="108935979"/>
<dbReference type="MassIVE" id="Q6UWR7"/>
<dbReference type="PaxDb" id="9606-ENSP00000296741"/>
<dbReference type="PeptideAtlas" id="Q6UWR7"/>
<dbReference type="ProteomicsDB" id="67516"/>
<dbReference type="Antibodypedia" id="28837">
    <property type="antibodies" value="197 antibodies from 21 providers"/>
</dbReference>
<dbReference type="DNASU" id="133121"/>
<dbReference type="Ensembl" id="ENST00000296741.7">
    <property type="protein sequence ID" value="ENSP00000296741.2"/>
    <property type="gene ID" value="ENSG00000164303.11"/>
</dbReference>
<dbReference type="GeneID" id="133121"/>
<dbReference type="KEGG" id="hsa:133121"/>
<dbReference type="MANE-Select" id="ENST00000296741.7">
    <property type="protein sequence ID" value="ENSP00000296741.2"/>
    <property type="RefSeq nucleotide sequence ID" value="NM_153343.4"/>
    <property type="RefSeq protein sequence ID" value="NP_699174.1"/>
</dbReference>
<dbReference type="UCSC" id="uc003iwc.3">
    <property type="organism name" value="human"/>
</dbReference>
<dbReference type="AGR" id="HGNC:23409"/>
<dbReference type="CTD" id="133121"/>
<dbReference type="DisGeNET" id="133121"/>
<dbReference type="GeneCards" id="ENPP6"/>
<dbReference type="HGNC" id="HGNC:23409">
    <property type="gene designation" value="ENPP6"/>
</dbReference>
<dbReference type="HPA" id="ENSG00000164303">
    <property type="expression patterns" value="Group enriched (brain, kidney, ovary)"/>
</dbReference>
<dbReference type="MIM" id="616983">
    <property type="type" value="gene"/>
</dbReference>
<dbReference type="neXtProt" id="NX_Q6UWR7"/>
<dbReference type="OpenTargets" id="ENSG00000164303"/>
<dbReference type="PharmGKB" id="PA134945118"/>
<dbReference type="VEuPathDB" id="HostDB:ENSG00000164303"/>
<dbReference type="eggNOG" id="KOG2645">
    <property type="taxonomic scope" value="Eukaryota"/>
</dbReference>
<dbReference type="GeneTree" id="ENSGT00940000158457"/>
<dbReference type="HOGENOM" id="CLU_017594_2_0_1"/>
<dbReference type="InParanoid" id="Q6UWR7"/>
<dbReference type="OMA" id="NVSMYYW"/>
<dbReference type="OrthoDB" id="415411at2759"/>
<dbReference type="PAN-GO" id="Q6UWR7">
    <property type="GO annotations" value="4 GO annotations based on evolutionary models"/>
</dbReference>
<dbReference type="PhylomeDB" id="Q6UWR7"/>
<dbReference type="TreeFam" id="TF330032"/>
<dbReference type="BRENDA" id="3.1.4.3">
    <property type="organism ID" value="2681"/>
</dbReference>
<dbReference type="PathwayCommons" id="Q6UWR7"/>
<dbReference type="Reactome" id="R-HSA-6814848">
    <property type="pathway name" value="Glycerophospholipid catabolism"/>
</dbReference>
<dbReference type="SignaLink" id="Q6UWR7"/>
<dbReference type="BioGRID-ORCS" id="133121">
    <property type="hits" value="11 hits in 1142 CRISPR screens"/>
</dbReference>
<dbReference type="CD-CODE" id="FB4E32DD">
    <property type="entry name" value="Presynaptic clusters and postsynaptic densities"/>
</dbReference>
<dbReference type="ChiTaRS" id="ENPP6">
    <property type="organism name" value="human"/>
</dbReference>
<dbReference type="GenomeRNAi" id="133121"/>
<dbReference type="Pharos" id="Q6UWR7">
    <property type="development level" value="Tbio"/>
</dbReference>
<dbReference type="PRO" id="PR:Q6UWR7"/>
<dbReference type="Proteomes" id="UP000005640">
    <property type="component" value="Chromosome 4"/>
</dbReference>
<dbReference type="RNAct" id="Q6UWR7">
    <property type="molecule type" value="protein"/>
</dbReference>
<dbReference type="Bgee" id="ENSG00000164303">
    <property type="expression patterns" value="Expressed in C1 segment of cervical spinal cord and 128 other cell types or tissues"/>
</dbReference>
<dbReference type="ExpressionAtlas" id="Q6UWR7">
    <property type="expression patterns" value="baseline and differential"/>
</dbReference>
<dbReference type="GO" id="GO:0070062">
    <property type="term" value="C:extracellular exosome"/>
    <property type="evidence" value="ECO:0007005"/>
    <property type="project" value="UniProtKB"/>
</dbReference>
<dbReference type="GO" id="GO:0005576">
    <property type="term" value="C:extracellular region"/>
    <property type="evidence" value="ECO:0000314"/>
    <property type="project" value="UniProtKB"/>
</dbReference>
<dbReference type="GO" id="GO:0005886">
    <property type="term" value="C:plasma membrane"/>
    <property type="evidence" value="ECO:0000314"/>
    <property type="project" value="UniProtKB"/>
</dbReference>
<dbReference type="GO" id="GO:0098552">
    <property type="term" value="C:side of membrane"/>
    <property type="evidence" value="ECO:0007669"/>
    <property type="project" value="UniProtKB-KW"/>
</dbReference>
<dbReference type="GO" id="GO:0047390">
    <property type="term" value="F:glycerophosphocholine cholinephosphodiesterase activity"/>
    <property type="evidence" value="ECO:0000314"/>
    <property type="project" value="UniProtKB"/>
</dbReference>
<dbReference type="GO" id="GO:0008889">
    <property type="term" value="F:glycerophosphodiester phosphodiesterase activity"/>
    <property type="evidence" value="ECO:0000318"/>
    <property type="project" value="GO_Central"/>
</dbReference>
<dbReference type="GO" id="GO:0046872">
    <property type="term" value="F:metal ion binding"/>
    <property type="evidence" value="ECO:0007669"/>
    <property type="project" value="UniProtKB-KW"/>
</dbReference>
<dbReference type="GO" id="GO:0008081">
    <property type="term" value="F:phosphoric diester hydrolase activity"/>
    <property type="evidence" value="ECO:0000314"/>
    <property type="project" value="UniProtKB"/>
</dbReference>
<dbReference type="GO" id="GO:0019695">
    <property type="term" value="P:choline metabolic process"/>
    <property type="evidence" value="ECO:0000314"/>
    <property type="project" value="UniProtKB"/>
</dbReference>
<dbReference type="GO" id="GO:0046475">
    <property type="term" value="P:glycerophospholipid catabolic process"/>
    <property type="evidence" value="ECO:0000304"/>
    <property type="project" value="Reactome"/>
</dbReference>
<dbReference type="GO" id="GO:0006629">
    <property type="term" value="P:lipid metabolic process"/>
    <property type="evidence" value="ECO:0000314"/>
    <property type="project" value="UniProtKB"/>
</dbReference>
<dbReference type="CDD" id="cd16018">
    <property type="entry name" value="Enpp"/>
    <property type="match status" value="1"/>
</dbReference>
<dbReference type="FunFam" id="3.30.1360.180:FF:000001">
    <property type="entry name" value="Ectonucleotide pyrophosphatase/phosphodiesterase family member 6"/>
    <property type="match status" value="1"/>
</dbReference>
<dbReference type="FunFam" id="3.40.720.10:FF:000029">
    <property type="entry name" value="ectonucleotide pyrophosphatase/phosphodiesterase family member 6"/>
    <property type="match status" value="1"/>
</dbReference>
<dbReference type="Gene3D" id="3.30.1360.180">
    <property type="match status" value="1"/>
</dbReference>
<dbReference type="Gene3D" id="3.40.720.10">
    <property type="entry name" value="Alkaline Phosphatase, subunit A"/>
    <property type="match status" value="1"/>
</dbReference>
<dbReference type="InterPro" id="IPR017850">
    <property type="entry name" value="Alkaline_phosphatase_core_sf"/>
</dbReference>
<dbReference type="InterPro" id="IPR002591">
    <property type="entry name" value="Phosphodiest/P_Trfase"/>
</dbReference>
<dbReference type="PANTHER" id="PTHR10151">
    <property type="entry name" value="ECTONUCLEOTIDE PYROPHOSPHATASE/PHOSPHODIESTERASE"/>
    <property type="match status" value="1"/>
</dbReference>
<dbReference type="PANTHER" id="PTHR10151:SF66">
    <property type="entry name" value="GLYCEROPHOSPHOCHOLINE CHOLINEPHOSPHODIESTERASE ENPP6"/>
    <property type="match status" value="1"/>
</dbReference>
<dbReference type="Pfam" id="PF01663">
    <property type="entry name" value="Phosphodiest"/>
    <property type="match status" value="1"/>
</dbReference>
<dbReference type="SUPFAM" id="SSF53649">
    <property type="entry name" value="Alkaline phosphatase-like"/>
    <property type="match status" value="1"/>
</dbReference>
<evidence type="ECO:0000250" key="1"/>
<evidence type="ECO:0000250" key="2">
    <source>
        <dbReference type="UniProtKB" id="B0BND0"/>
    </source>
</evidence>
<evidence type="ECO:0000250" key="3">
    <source>
        <dbReference type="UniProtKB" id="Q8BGN3"/>
    </source>
</evidence>
<evidence type="ECO:0000255" key="4"/>
<evidence type="ECO:0000269" key="5">
    <source>
    </source>
</evidence>
<evidence type="ECO:0000269" key="6">
    <source>
    </source>
</evidence>
<evidence type="ECO:0000303" key="7">
    <source>
    </source>
</evidence>
<evidence type="ECO:0000305" key="8"/>
<evidence type="ECO:0000312" key="9">
    <source>
        <dbReference type="HGNC" id="HGNC:23409"/>
    </source>
</evidence>
<reference key="1">
    <citation type="journal article" date="2003" name="Genome Res.">
        <title>The secreted protein discovery initiative (SPDI), a large-scale effort to identify novel human secreted and transmembrane proteins: a bioinformatics assessment.</title>
        <authorList>
            <person name="Clark H.F."/>
            <person name="Gurney A.L."/>
            <person name="Abaya E."/>
            <person name="Baker K."/>
            <person name="Baldwin D.T."/>
            <person name="Brush J."/>
            <person name="Chen J."/>
            <person name="Chow B."/>
            <person name="Chui C."/>
            <person name="Crowley C."/>
            <person name="Currell B."/>
            <person name="Deuel B."/>
            <person name="Dowd P."/>
            <person name="Eaton D."/>
            <person name="Foster J.S."/>
            <person name="Grimaldi C."/>
            <person name="Gu Q."/>
            <person name="Hass P.E."/>
            <person name="Heldens S."/>
            <person name="Huang A."/>
            <person name="Kim H.S."/>
            <person name="Klimowski L."/>
            <person name="Jin Y."/>
            <person name="Johnson S."/>
            <person name="Lee J."/>
            <person name="Lewis L."/>
            <person name="Liao D."/>
            <person name="Mark M.R."/>
            <person name="Robbie E."/>
            <person name="Sanchez C."/>
            <person name="Schoenfeld J."/>
            <person name="Seshagiri S."/>
            <person name="Simmons L."/>
            <person name="Singh J."/>
            <person name="Smith V."/>
            <person name="Stinson J."/>
            <person name="Vagts A."/>
            <person name="Vandlen R.L."/>
            <person name="Watanabe C."/>
            <person name="Wieand D."/>
            <person name="Woods K."/>
            <person name="Xie M.-H."/>
            <person name="Yansura D.G."/>
            <person name="Yi S."/>
            <person name="Yu G."/>
            <person name="Yuan J."/>
            <person name="Zhang M."/>
            <person name="Zhang Z."/>
            <person name="Goddard A.D."/>
            <person name="Wood W.I."/>
            <person name="Godowski P.J."/>
            <person name="Gray A.M."/>
        </authorList>
    </citation>
    <scope>NUCLEOTIDE SEQUENCE [LARGE SCALE MRNA]</scope>
    <scope>VARIANT GLY-419</scope>
</reference>
<reference key="2">
    <citation type="journal article" date="2004" name="Nat. Genet.">
        <title>Complete sequencing and characterization of 21,243 full-length human cDNAs.</title>
        <authorList>
            <person name="Ota T."/>
            <person name="Suzuki Y."/>
            <person name="Nishikawa T."/>
            <person name="Otsuki T."/>
            <person name="Sugiyama T."/>
            <person name="Irie R."/>
            <person name="Wakamatsu A."/>
            <person name="Hayashi K."/>
            <person name="Sato H."/>
            <person name="Nagai K."/>
            <person name="Kimura K."/>
            <person name="Makita H."/>
            <person name="Sekine M."/>
            <person name="Obayashi M."/>
            <person name="Nishi T."/>
            <person name="Shibahara T."/>
            <person name="Tanaka T."/>
            <person name="Ishii S."/>
            <person name="Yamamoto J."/>
            <person name="Saito K."/>
            <person name="Kawai Y."/>
            <person name="Isono Y."/>
            <person name="Nakamura Y."/>
            <person name="Nagahari K."/>
            <person name="Murakami K."/>
            <person name="Yasuda T."/>
            <person name="Iwayanagi T."/>
            <person name="Wagatsuma M."/>
            <person name="Shiratori A."/>
            <person name="Sudo H."/>
            <person name="Hosoiri T."/>
            <person name="Kaku Y."/>
            <person name="Kodaira H."/>
            <person name="Kondo H."/>
            <person name="Sugawara M."/>
            <person name="Takahashi M."/>
            <person name="Kanda K."/>
            <person name="Yokoi T."/>
            <person name="Furuya T."/>
            <person name="Kikkawa E."/>
            <person name="Omura Y."/>
            <person name="Abe K."/>
            <person name="Kamihara K."/>
            <person name="Katsuta N."/>
            <person name="Sato K."/>
            <person name="Tanikawa M."/>
            <person name="Yamazaki M."/>
            <person name="Ninomiya K."/>
            <person name="Ishibashi T."/>
            <person name="Yamashita H."/>
            <person name="Murakawa K."/>
            <person name="Fujimori K."/>
            <person name="Tanai H."/>
            <person name="Kimata M."/>
            <person name="Watanabe M."/>
            <person name="Hiraoka S."/>
            <person name="Chiba Y."/>
            <person name="Ishida S."/>
            <person name="Ono Y."/>
            <person name="Takiguchi S."/>
            <person name="Watanabe S."/>
            <person name="Yosida M."/>
            <person name="Hotuta T."/>
            <person name="Kusano J."/>
            <person name="Kanehori K."/>
            <person name="Takahashi-Fujii A."/>
            <person name="Hara H."/>
            <person name="Tanase T.-O."/>
            <person name="Nomura Y."/>
            <person name="Togiya S."/>
            <person name="Komai F."/>
            <person name="Hara R."/>
            <person name="Takeuchi K."/>
            <person name="Arita M."/>
            <person name="Imose N."/>
            <person name="Musashino K."/>
            <person name="Yuuki H."/>
            <person name="Oshima A."/>
            <person name="Sasaki N."/>
            <person name="Aotsuka S."/>
            <person name="Yoshikawa Y."/>
            <person name="Matsunawa H."/>
            <person name="Ichihara T."/>
            <person name="Shiohata N."/>
            <person name="Sano S."/>
            <person name="Moriya S."/>
            <person name="Momiyama H."/>
            <person name="Satoh N."/>
            <person name="Takami S."/>
            <person name="Terashima Y."/>
            <person name="Suzuki O."/>
            <person name="Nakagawa S."/>
            <person name="Senoh A."/>
            <person name="Mizoguchi H."/>
            <person name="Goto Y."/>
            <person name="Shimizu F."/>
            <person name="Wakebe H."/>
            <person name="Hishigaki H."/>
            <person name="Watanabe T."/>
            <person name="Sugiyama A."/>
            <person name="Takemoto M."/>
            <person name="Kawakami B."/>
            <person name="Yamazaki M."/>
            <person name="Watanabe K."/>
            <person name="Kumagai A."/>
            <person name="Itakura S."/>
            <person name="Fukuzumi Y."/>
            <person name="Fujimori Y."/>
            <person name="Komiyama M."/>
            <person name="Tashiro H."/>
            <person name="Tanigami A."/>
            <person name="Fujiwara T."/>
            <person name="Ono T."/>
            <person name="Yamada K."/>
            <person name="Fujii Y."/>
            <person name="Ozaki K."/>
            <person name="Hirao M."/>
            <person name="Ohmori Y."/>
            <person name="Kawabata A."/>
            <person name="Hikiji T."/>
            <person name="Kobatake N."/>
            <person name="Inagaki H."/>
            <person name="Ikema Y."/>
            <person name="Okamoto S."/>
            <person name="Okitani R."/>
            <person name="Kawakami T."/>
            <person name="Noguchi S."/>
            <person name="Itoh T."/>
            <person name="Shigeta K."/>
            <person name="Senba T."/>
            <person name="Matsumura K."/>
            <person name="Nakajima Y."/>
            <person name="Mizuno T."/>
            <person name="Morinaga M."/>
            <person name="Sasaki M."/>
            <person name="Togashi T."/>
            <person name="Oyama M."/>
            <person name="Hata H."/>
            <person name="Watanabe M."/>
            <person name="Komatsu T."/>
            <person name="Mizushima-Sugano J."/>
            <person name="Satoh T."/>
            <person name="Shirai Y."/>
            <person name="Takahashi Y."/>
            <person name="Nakagawa K."/>
            <person name="Okumura K."/>
            <person name="Nagase T."/>
            <person name="Nomura N."/>
            <person name="Kikuchi H."/>
            <person name="Masuho Y."/>
            <person name="Yamashita R."/>
            <person name="Nakai K."/>
            <person name="Yada T."/>
            <person name="Nakamura Y."/>
            <person name="Ohara O."/>
            <person name="Isogai T."/>
            <person name="Sugano S."/>
        </authorList>
    </citation>
    <scope>NUCLEOTIDE SEQUENCE [LARGE SCALE MRNA]</scope>
    <source>
        <tissue>Testis</tissue>
    </source>
</reference>
<reference key="3">
    <citation type="journal article" date="2005" name="Nature">
        <title>Generation and annotation of the DNA sequences of human chromosomes 2 and 4.</title>
        <authorList>
            <person name="Hillier L.W."/>
            <person name="Graves T.A."/>
            <person name="Fulton R.S."/>
            <person name="Fulton L.A."/>
            <person name="Pepin K.H."/>
            <person name="Minx P."/>
            <person name="Wagner-McPherson C."/>
            <person name="Layman D."/>
            <person name="Wylie K."/>
            <person name="Sekhon M."/>
            <person name="Becker M.C."/>
            <person name="Fewell G.A."/>
            <person name="Delehaunty K.D."/>
            <person name="Miner T.L."/>
            <person name="Nash W.E."/>
            <person name="Kremitzki C."/>
            <person name="Oddy L."/>
            <person name="Du H."/>
            <person name="Sun H."/>
            <person name="Bradshaw-Cordum H."/>
            <person name="Ali J."/>
            <person name="Carter J."/>
            <person name="Cordes M."/>
            <person name="Harris A."/>
            <person name="Isak A."/>
            <person name="van Brunt A."/>
            <person name="Nguyen C."/>
            <person name="Du F."/>
            <person name="Courtney L."/>
            <person name="Kalicki J."/>
            <person name="Ozersky P."/>
            <person name="Abbott S."/>
            <person name="Armstrong J."/>
            <person name="Belter E.A."/>
            <person name="Caruso L."/>
            <person name="Cedroni M."/>
            <person name="Cotton M."/>
            <person name="Davidson T."/>
            <person name="Desai A."/>
            <person name="Elliott G."/>
            <person name="Erb T."/>
            <person name="Fronick C."/>
            <person name="Gaige T."/>
            <person name="Haakenson W."/>
            <person name="Haglund K."/>
            <person name="Holmes A."/>
            <person name="Harkins R."/>
            <person name="Kim K."/>
            <person name="Kruchowski S.S."/>
            <person name="Strong C.M."/>
            <person name="Grewal N."/>
            <person name="Goyea E."/>
            <person name="Hou S."/>
            <person name="Levy A."/>
            <person name="Martinka S."/>
            <person name="Mead K."/>
            <person name="McLellan M.D."/>
            <person name="Meyer R."/>
            <person name="Randall-Maher J."/>
            <person name="Tomlinson C."/>
            <person name="Dauphin-Kohlberg S."/>
            <person name="Kozlowicz-Reilly A."/>
            <person name="Shah N."/>
            <person name="Swearengen-Shahid S."/>
            <person name="Snider J."/>
            <person name="Strong J.T."/>
            <person name="Thompson J."/>
            <person name="Yoakum M."/>
            <person name="Leonard S."/>
            <person name="Pearman C."/>
            <person name="Trani L."/>
            <person name="Radionenko M."/>
            <person name="Waligorski J.E."/>
            <person name="Wang C."/>
            <person name="Rock S.M."/>
            <person name="Tin-Wollam A.-M."/>
            <person name="Maupin R."/>
            <person name="Latreille P."/>
            <person name="Wendl M.C."/>
            <person name="Yang S.-P."/>
            <person name="Pohl C."/>
            <person name="Wallis J.W."/>
            <person name="Spieth J."/>
            <person name="Bieri T.A."/>
            <person name="Berkowicz N."/>
            <person name="Nelson J.O."/>
            <person name="Osborne J."/>
            <person name="Ding L."/>
            <person name="Meyer R."/>
            <person name="Sabo A."/>
            <person name="Shotland Y."/>
            <person name="Sinha P."/>
            <person name="Wohldmann P.E."/>
            <person name="Cook L.L."/>
            <person name="Hickenbotham M.T."/>
            <person name="Eldred J."/>
            <person name="Williams D."/>
            <person name="Jones T.A."/>
            <person name="She X."/>
            <person name="Ciccarelli F.D."/>
            <person name="Izaurralde E."/>
            <person name="Taylor J."/>
            <person name="Schmutz J."/>
            <person name="Myers R.M."/>
            <person name="Cox D.R."/>
            <person name="Huang X."/>
            <person name="McPherson J.D."/>
            <person name="Mardis E.R."/>
            <person name="Clifton S.W."/>
            <person name="Warren W.C."/>
            <person name="Chinwalla A.T."/>
            <person name="Eddy S.R."/>
            <person name="Marra M.A."/>
            <person name="Ovcharenko I."/>
            <person name="Furey T.S."/>
            <person name="Miller W."/>
            <person name="Eichler E.E."/>
            <person name="Bork P."/>
            <person name="Suyama M."/>
            <person name="Torrents D."/>
            <person name="Waterston R.H."/>
            <person name="Wilson R.K."/>
        </authorList>
    </citation>
    <scope>NUCLEOTIDE SEQUENCE [LARGE SCALE GENOMIC DNA]</scope>
</reference>
<reference key="4">
    <citation type="journal article" date="2004" name="Genome Res.">
        <title>The status, quality, and expansion of the NIH full-length cDNA project: the Mammalian Gene Collection (MGC).</title>
        <authorList>
            <consortium name="The MGC Project Team"/>
        </authorList>
    </citation>
    <scope>NUCLEOTIDE SEQUENCE [LARGE SCALE MRNA]</scope>
    <source>
        <tissue>Brain</tissue>
    </source>
</reference>
<reference key="5">
    <citation type="journal article" date="2005" name="J. Biol. Chem.">
        <title>Biochemical and molecular characterization of a novel choline-specific glycerophosphodiester phosphodiesterase belonging to the nucleotide pyrophosphatase/phosphodiesterase family.</title>
        <authorList>
            <person name="Sakagami H."/>
            <person name="Aoki J."/>
            <person name="Natori Y."/>
            <person name="Nishikawa K."/>
            <person name="Kakehi Y."/>
            <person name="Natori Y."/>
            <person name="Arai H."/>
        </authorList>
    </citation>
    <scope>FUNCTION</scope>
    <scope>CATALYTIC ACTIVITY</scope>
    <scope>SUBCELLULAR LOCATION</scope>
    <scope>SUBSTRATE SPECIFICITY</scope>
    <scope>COFACTOR</scope>
    <scope>ACTIVITY REGULATION</scope>
    <scope>BIOPHYSICOCHEMICAL PROPERTIES</scope>
    <scope>TISSUE SPECIFICITY</scope>
</reference>
<reference key="6">
    <citation type="journal article" date="2013" name="Neurochem. Res.">
        <title>Bovine brain myelin glycerophosphocholine choline phosphodiesterase is an alkaline lysosphingomyelinase of the eNPP-family, regulated by lysosomal sorting.</title>
        <authorList>
            <person name="Greiner-Tollersrud L."/>
            <person name="Berg T."/>
            <person name="Stensland H.M."/>
            <person name="Evjen G."/>
            <person name="Greiner-Tollersrud O.K."/>
        </authorList>
    </citation>
    <scope>HOMODIMERIZATION</scope>
    <scope>GPI-ANCHOR</scope>
    <source>
        <tissue>Brain</tissue>
    </source>
</reference>
<comment type="function">
    <text evidence="3 6">Choline-specific glycerophosphodiesterase that hydrolyzes glycerophosphocholine (GPC) and lysophosphatidylcholine (LPC) and contributes to supplying choline to the cells (PubMed:15788404). Has a preference for LPC with short (12:0 and 14:0) or polyunsaturated (18:2 and 20:4) fatty acids. In vitro, hydrolyzes only choline-containing lysophospholipids, such as sphingosylphosphorylcholine (SPC), platelet-activating factor (PAF) and lysoPAF, but not other lysophospholipids (By similarity).</text>
</comment>
<comment type="catalytic activity">
    <reaction evidence="6">
        <text>sn-glycerol 3-phosphocholine + H2O = phosphocholine + glycerol + H(+)</text>
        <dbReference type="Rhea" id="RHEA:19545"/>
        <dbReference type="ChEBI" id="CHEBI:15377"/>
        <dbReference type="ChEBI" id="CHEBI:15378"/>
        <dbReference type="ChEBI" id="CHEBI:16870"/>
        <dbReference type="ChEBI" id="CHEBI:17754"/>
        <dbReference type="ChEBI" id="CHEBI:295975"/>
        <dbReference type="EC" id="3.1.4.38"/>
    </reaction>
    <physiologicalReaction direction="left-to-right" evidence="3">
        <dbReference type="Rhea" id="RHEA:19546"/>
    </physiologicalReaction>
</comment>
<comment type="catalytic activity">
    <reaction evidence="6">
        <text>a 1-acyl-sn-glycero-3-phosphocholine + H2O = a 1-acyl-sn-glycerol + phosphocholine + H(+)</text>
        <dbReference type="Rhea" id="RHEA:44720"/>
        <dbReference type="ChEBI" id="CHEBI:15377"/>
        <dbReference type="ChEBI" id="CHEBI:15378"/>
        <dbReference type="ChEBI" id="CHEBI:58168"/>
        <dbReference type="ChEBI" id="CHEBI:64683"/>
        <dbReference type="ChEBI" id="CHEBI:295975"/>
    </reaction>
    <physiologicalReaction direction="left-to-right" evidence="3">
        <dbReference type="Rhea" id="RHEA:44721"/>
    </physiologicalReaction>
</comment>
<comment type="catalytic activity">
    <reaction evidence="3">
        <text>a 1-O-alkyl-sn-glycero-3-phosphocholine + H2O = a 1-O-alkyl-sn-glycerol + phosphocholine + H(+)</text>
        <dbReference type="Rhea" id="RHEA:36083"/>
        <dbReference type="ChEBI" id="CHEBI:15377"/>
        <dbReference type="ChEBI" id="CHEBI:15378"/>
        <dbReference type="ChEBI" id="CHEBI:15850"/>
        <dbReference type="ChEBI" id="CHEBI:30909"/>
        <dbReference type="ChEBI" id="CHEBI:295975"/>
    </reaction>
    <physiologicalReaction direction="left-to-right" evidence="3">
        <dbReference type="Rhea" id="RHEA:36084"/>
    </physiologicalReaction>
</comment>
<comment type="catalytic activity">
    <reaction evidence="3">
        <text>1-dodecanoyl-sn-glycero-3-phosphocholine + H2O = 1-dodecanoyl-sn-glycerol + phosphocholine + H(+)</text>
        <dbReference type="Rhea" id="RHEA:41127"/>
        <dbReference type="ChEBI" id="CHEBI:15377"/>
        <dbReference type="ChEBI" id="CHEBI:15378"/>
        <dbReference type="ChEBI" id="CHEBI:74966"/>
        <dbReference type="ChEBI" id="CHEBI:75529"/>
        <dbReference type="ChEBI" id="CHEBI:295975"/>
    </reaction>
    <physiologicalReaction direction="left-to-right" evidence="3">
        <dbReference type="Rhea" id="RHEA:41128"/>
    </physiologicalReaction>
</comment>
<comment type="catalytic activity">
    <reaction evidence="3">
        <text>1-hexadecanoyl-sn-glycero-3-phosphocholine + H2O = 1-hexadecanoyl-sn-glycerol + phosphocholine + H(+)</text>
        <dbReference type="Rhea" id="RHEA:41119"/>
        <dbReference type="ChEBI" id="CHEBI:15377"/>
        <dbReference type="ChEBI" id="CHEBI:15378"/>
        <dbReference type="ChEBI" id="CHEBI:72998"/>
        <dbReference type="ChEBI" id="CHEBI:75542"/>
        <dbReference type="ChEBI" id="CHEBI:295975"/>
    </reaction>
    <physiologicalReaction direction="left-to-right" evidence="3">
        <dbReference type="Rhea" id="RHEA:41120"/>
    </physiologicalReaction>
</comment>
<comment type="catalytic activity">
    <reaction evidence="3">
        <text>1-(5Z,8Z,11Z,14Z-eicosatetraenoyl)-sn-glycero-3-phosphocholine + H2O = 1-(5Z,8Z,11Z,14Z-eicosatetraenoyl)-sn-glycerol + phosphocholine + H(+)</text>
        <dbReference type="Rhea" id="RHEA:41003"/>
        <dbReference type="ChEBI" id="CHEBI:15377"/>
        <dbReference type="ChEBI" id="CHEBI:15378"/>
        <dbReference type="ChEBI" id="CHEBI:34071"/>
        <dbReference type="ChEBI" id="CHEBI:74344"/>
        <dbReference type="ChEBI" id="CHEBI:295975"/>
    </reaction>
    <physiologicalReaction direction="left-to-right" evidence="3">
        <dbReference type="Rhea" id="RHEA:41004"/>
    </physiologicalReaction>
</comment>
<comment type="catalytic activity">
    <reaction evidence="3">
        <text>1-tetradecanoyl-sn-glycero-3-phosphocholine + H2O = 1-tetradecanoyl-sn-glycerol + phosphocholine + H(+)</text>
        <dbReference type="Rhea" id="RHEA:40999"/>
        <dbReference type="ChEBI" id="CHEBI:15377"/>
        <dbReference type="ChEBI" id="CHEBI:15378"/>
        <dbReference type="ChEBI" id="CHEBI:64489"/>
        <dbReference type="ChEBI" id="CHEBI:75536"/>
        <dbReference type="ChEBI" id="CHEBI:295975"/>
    </reaction>
    <physiologicalReaction direction="left-to-right" evidence="3">
        <dbReference type="Rhea" id="RHEA:41000"/>
    </physiologicalReaction>
</comment>
<comment type="catalytic activity">
    <reaction evidence="3">
        <text>sphing-4-enine-phosphocholine + H2O = sphing-4-enine + phosphocholine + H(+)</text>
        <dbReference type="Rhea" id="RHEA:41095"/>
        <dbReference type="ChEBI" id="CHEBI:15377"/>
        <dbReference type="ChEBI" id="CHEBI:15378"/>
        <dbReference type="ChEBI" id="CHEBI:57756"/>
        <dbReference type="ChEBI" id="CHEBI:58906"/>
        <dbReference type="ChEBI" id="CHEBI:295975"/>
    </reaction>
    <physiologicalReaction direction="left-to-right" evidence="3">
        <dbReference type="Rhea" id="RHEA:41096"/>
    </physiologicalReaction>
</comment>
<comment type="catalytic activity">
    <reaction evidence="3">
        <text>1-(9Z-octadecenoyl)-sn-glycero-3-phosphocholine + H2O = 1-(9Z-octadecenoyl)-sn-glycerol + phosphocholine + H(+)</text>
        <dbReference type="Rhea" id="RHEA:41091"/>
        <dbReference type="ChEBI" id="CHEBI:15377"/>
        <dbReference type="ChEBI" id="CHEBI:15378"/>
        <dbReference type="ChEBI" id="CHEBI:28610"/>
        <dbReference type="ChEBI" id="CHEBI:75757"/>
        <dbReference type="ChEBI" id="CHEBI:295975"/>
    </reaction>
    <physiologicalReaction direction="left-to-right" evidence="3">
        <dbReference type="Rhea" id="RHEA:41092"/>
    </physiologicalReaction>
</comment>
<comment type="catalytic activity">
    <reaction evidence="3">
        <text>1-(9Z,12Z)-octadecadienoyl-sn-glycero-3-phosphocholine + H2O = 1-(9Z,12Z-octadecadienoyl)-sn-glycerol + phosphocholine + H(+)</text>
        <dbReference type="Rhea" id="RHEA:41115"/>
        <dbReference type="ChEBI" id="CHEBI:15377"/>
        <dbReference type="ChEBI" id="CHEBI:15378"/>
        <dbReference type="ChEBI" id="CHEBI:28733"/>
        <dbReference type="ChEBI" id="CHEBI:75561"/>
        <dbReference type="ChEBI" id="CHEBI:295975"/>
    </reaction>
    <physiologicalReaction direction="left-to-right" evidence="3">
        <dbReference type="Rhea" id="RHEA:41116"/>
    </physiologicalReaction>
</comment>
<comment type="catalytic activity">
    <reaction evidence="3">
        <text>glycero-2-phosphocholine + H2O = phosphocholine + glycerol + H(+)</text>
        <dbReference type="Rhea" id="RHEA:61684"/>
        <dbReference type="ChEBI" id="CHEBI:15377"/>
        <dbReference type="ChEBI" id="CHEBI:15378"/>
        <dbReference type="ChEBI" id="CHEBI:17754"/>
        <dbReference type="ChEBI" id="CHEBI:144950"/>
        <dbReference type="ChEBI" id="CHEBI:295975"/>
    </reaction>
    <physiologicalReaction direction="left-to-right" evidence="3">
        <dbReference type="Rhea" id="RHEA:61685"/>
    </physiologicalReaction>
</comment>
<comment type="cofactor">
    <cofactor evidence="3">
        <name>Zn(2+)</name>
        <dbReference type="ChEBI" id="CHEBI:29105"/>
    </cofactor>
    <text evidence="3">Binds 2 Zn(2+) ions per subunit.</text>
</comment>
<comment type="activity regulation">
    <text evidence="6">Inhibited by EDTA and EGTA in vitro.</text>
</comment>
<comment type="biophysicochemical properties">
    <kinetics>
        <KM evidence="6">344 uM for GPC</KM>
        <KM evidence="6">296 uM for 12:0-LPC</KM>
        <KM evidence="6">440 uM for 14:0-LPC</KM>
        <KM evidence="6">165 uM for 16:0-LPC</KM>
        <KM evidence="6">434 uM for 18:2-LPC</KM>
        <KM evidence="6">563 uM for 20:4-LPC</KM>
        <Vmax evidence="6">484.0 nmol/min/mg enzyme with GPC as substrate</Vmax>
        <Vmax evidence="6">463.0 nmol/min/mg enzyme with 12:0-LPC as substrate</Vmax>
        <Vmax evidence="6">367.0 nmol/min/mg enzyme with 14:0-LPC as substrate</Vmax>
        <Vmax evidence="6">89.0 nmol/min/mg enzyme with 16:0-LPC as substrate</Vmax>
        <Vmax evidence="6">285.0 nmol/min/mg enzyme with 18:2-LPC as substrate</Vmax>
        <Vmax evidence="6">470.0 nmol/min/mg enzyme with 20:4-LPC as substrate</Vmax>
    </kinetics>
    <phDependence>
        <text evidence="6">Optimum pH is 8.5-7.5.</text>
    </phDependence>
</comment>
<comment type="subunit">
    <text evidence="1 3">Homodimer; disulfide-linked. Homotetramer.</text>
</comment>
<comment type="interaction">
    <interactant intactId="EBI-13382816">
        <id>Q6UWR7</id>
    </interactant>
    <interactant intactId="EBI-12092171">
        <id>Q12797-6</id>
        <label>ASPH</label>
    </interactant>
    <organismsDiffer>false</organismsDiffer>
    <experiments>3</experiments>
</comment>
<comment type="subcellular location">
    <subcellularLocation>
        <location evidence="6">Cell membrane</location>
        <topology evidence="6">Lipid-anchor</topology>
        <topology evidence="6">GPI-anchor</topology>
    </subcellularLocation>
    <text>A small amount of the protein may be found in the extracellular milieu.</text>
</comment>
<comment type="tissue specificity">
    <text evidence="6">Predominantly expressed in kidney and brain. In the kidney, expressed specifically in the proximal tubules and thin descending limbs of Henle (at protein level).</text>
</comment>
<comment type="similarity">
    <text evidence="8">Belongs to the nucleotide pyrophosphatase/phosphodiesterase family.</text>
</comment>
<keyword id="KW-1003">Cell membrane</keyword>
<keyword id="KW-1015">Disulfide bond</keyword>
<keyword id="KW-0325">Glycoprotein</keyword>
<keyword id="KW-0336">GPI-anchor</keyword>
<keyword id="KW-0378">Hydrolase</keyword>
<keyword id="KW-0442">Lipid degradation</keyword>
<keyword id="KW-0443">Lipid metabolism</keyword>
<keyword id="KW-0449">Lipoprotein</keyword>
<keyword id="KW-0472">Membrane</keyword>
<keyword id="KW-0479">Metal-binding</keyword>
<keyword id="KW-0597">Phosphoprotein</keyword>
<keyword id="KW-1267">Proteomics identification</keyword>
<keyword id="KW-1185">Reference proteome</keyword>
<keyword id="KW-0732">Signal</keyword>
<keyword id="KW-0862">Zinc</keyword>
<proteinExistence type="evidence at protein level"/>
<name>ENPP6_HUMAN</name>
<sequence length="440" mass="50241">MAVKLGTLLLALALGLAQPASARRKLLVFLLDGFRSDYISDEALESLPGFKEIVSRGVKVDYLTPDFPSLSYPNYYTLMTGRHCEVHQMIGNYMWDPTTNKSFDIGVNKDSLMPLWWNGSEPLWVTLTKAKRKVYMYYWPGCEVEILGVRPTYCLEYKNVPTDINFANAVSDALDSFKSGRADLAAIYHERIDVEGHHYGPASPQRKDALKAVDTVLKYMTKWIQERGLQDRLNVIIFSDHGMTDIFWMDKVIELNKYISLNDLQQVKDRGPVVSLWPAPGKHSEIYNKLSTVEHMTVYEKEAIPSRFYYKKGKFVSPLTLVADEGWFITENREMLPFWMNSTGRREGWQRGWHGYDNELMDMRGIFLAFGPDFKSNFRAAPIRSVDVYNVMCNVVGITPLPNNGSWSRVMCMLKGRASTAPPVWPSHCALALILLFLLA</sequence>
<feature type="signal peptide" evidence="1">
    <location>
        <begin position="1"/>
        <end position="22"/>
    </location>
</feature>
<feature type="chain" id="PRO_0000239361" description="Glycerophosphocholine cholinephosphodiesterase ENPP6">
    <location>
        <begin position="23"/>
        <end position="419"/>
    </location>
</feature>
<feature type="propeptide" id="PRO_0000420890" description="Removed in mature form" evidence="4">
    <location>
        <begin position="420"/>
        <end position="440"/>
    </location>
</feature>
<feature type="active site" description="Nucleophile" evidence="4">
    <location>
        <position position="71"/>
    </location>
</feature>
<feature type="binding site" evidence="3">
    <location>
        <position position="32"/>
    </location>
    <ligand>
        <name>substrate</name>
    </ligand>
</feature>
<feature type="binding site" evidence="3">
    <location>
        <position position="32"/>
    </location>
    <ligand>
        <name>Zn(2+)</name>
        <dbReference type="ChEBI" id="CHEBI:29105"/>
        <label>1</label>
        <note>catalytic</note>
    </ligand>
</feature>
<feature type="binding site" evidence="3">
    <location>
        <position position="71"/>
    </location>
    <ligand>
        <name>substrate</name>
    </ligand>
</feature>
<feature type="binding site" evidence="3">
    <location>
        <position position="71"/>
    </location>
    <ligand>
        <name>Zn(2+)</name>
        <dbReference type="ChEBI" id="CHEBI:29105"/>
        <label>1</label>
        <note>catalytic</note>
    </ligand>
</feature>
<feature type="binding site" evidence="3">
    <location>
        <position position="92"/>
    </location>
    <ligand>
        <name>substrate</name>
    </ligand>
</feature>
<feature type="binding site" evidence="3">
    <location>
        <position position="193"/>
    </location>
    <ligand>
        <name>substrate</name>
    </ligand>
</feature>
<feature type="binding site" evidence="3">
    <location>
        <position position="193"/>
    </location>
    <ligand>
        <name>Zn(2+)</name>
        <dbReference type="ChEBI" id="CHEBI:29105"/>
        <label>2</label>
        <note>catalytic</note>
    </ligand>
</feature>
<feature type="binding site" evidence="3">
    <location>
        <position position="197"/>
    </location>
    <ligand>
        <name>Zn(2+)</name>
        <dbReference type="ChEBI" id="CHEBI:29105"/>
        <label>2</label>
        <note>catalytic</note>
    </ligand>
</feature>
<feature type="binding site" evidence="3">
    <location>
        <position position="240"/>
    </location>
    <ligand>
        <name>Zn(2+)</name>
        <dbReference type="ChEBI" id="CHEBI:29105"/>
        <label>1</label>
        <note>catalytic</note>
    </ligand>
</feature>
<feature type="binding site" evidence="3">
    <location>
        <position position="241"/>
    </location>
    <ligand>
        <name>substrate</name>
    </ligand>
</feature>
<feature type="binding site" evidence="3">
    <location>
        <position position="241"/>
    </location>
    <ligand>
        <name>Zn(2+)</name>
        <dbReference type="ChEBI" id="CHEBI:29105"/>
        <label>1</label>
        <note>catalytic</note>
    </ligand>
</feature>
<feature type="binding site" evidence="3">
    <location>
        <position position="354"/>
    </location>
    <ligand>
        <name>substrate</name>
    </ligand>
</feature>
<feature type="binding site" evidence="3">
    <location>
        <position position="354"/>
    </location>
    <ligand>
        <name>Zn(2+)</name>
        <dbReference type="ChEBI" id="CHEBI:29105"/>
        <label>2</label>
        <note>catalytic</note>
    </ligand>
</feature>
<feature type="modified residue" description="Phosphoserine" evidence="2">
    <location>
        <position position="71"/>
    </location>
</feature>
<feature type="lipid moiety-binding region" description="GPI-anchor amidated serine" evidence="4">
    <location>
        <position position="419"/>
    </location>
</feature>
<feature type="glycosylation site" description="N-linked (GlcNAc...) asparagine" evidence="3">
    <location>
        <position position="100"/>
    </location>
</feature>
<feature type="glycosylation site" description="N-linked (GlcNAc...) asparagine" evidence="3">
    <location>
        <position position="118"/>
    </location>
</feature>
<feature type="glycosylation site" description="N-linked (GlcNAc...) asparagine" evidence="3">
    <location>
        <position position="341"/>
    </location>
</feature>
<feature type="glycosylation site" description="N-linked (GlcNAc...) asparagine" evidence="3">
    <location>
        <position position="404"/>
    </location>
</feature>
<feature type="disulfide bond" evidence="3">
    <location>
        <begin position="142"/>
        <end position="154"/>
    </location>
</feature>
<feature type="disulfide bond" description="Interchain" evidence="1">
    <location>
        <position position="412"/>
    </location>
</feature>
<feature type="sequence variant" id="VAR_052942" description="In dbSNP:rs4488969.">
    <original>D</original>
    <variation>N</variation>
    <location>
        <position position="357"/>
    </location>
</feature>
<feature type="sequence variant" id="VAR_026644" description="In dbSNP:rs4479748." evidence="5">
    <original>S</original>
    <variation>G</variation>
    <location>
        <position position="419"/>
    </location>
</feature>